<keyword id="KW-0119">Carbohydrate metabolism</keyword>
<keyword id="KW-0520">NAD</keyword>
<keyword id="KW-0521">NADP</keyword>
<keyword id="KW-0560">Oxidoreductase</keyword>
<keyword id="KW-1185">Reference proteome</keyword>
<reference key="1">
    <citation type="journal article" date="2004" name="Proc. Natl. Acad. Sci. U.S.A.">
        <title>Genome sequence of the enterobacterial phytopathogen Erwinia carotovora subsp. atroseptica and characterization of virulence factors.</title>
        <authorList>
            <person name="Bell K.S."/>
            <person name="Sebaihia M."/>
            <person name="Pritchard L."/>
            <person name="Holden M.T.G."/>
            <person name="Hyman L.J."/>
            <person name="Holeva M.C."/>
            <person name="Thomson N.R."/>
            <person name="Bentley S.D."/>
            <person name="Churcher L.J.C."/>
            <person name="Mungall K."/>
            <person name="Atkin R."/>
            <person name="Bason N."/>
            <person name="Brooks K."/>
            <person name="Chillingworth T."/>
            <person name="Clark K."/>
            <person name="Doggett J."/>
            <person name="Fraser A."/>
            <person name="Hance Z."/>
            <person name="Hauser H."/>
            <person name="Jagels K."/>
            <person name="Moule S."/>
            <person name="Norbertczak H."/>
            <person name="Ormond D."/>
            <person name="Price C."/>
            <person name="Quail M.A."/>
            <person name="Sanders M."/>
            <person name="Walker D."/>
            <person name="Whitehead S."/>
            <person name="Salmond G.P.C."/>
            <person name="Birch P.R.J."/>
            <person name="Parkhill J."/>
            <person name="Toth I.K."/>
        </authorList>
    </citation>
    <scope>NUCLEOTIDE SEQUENCE [LARGE SCALE GENOMIC DNA]</scope>
    <source>
        <strain>SCRI 1043 / ATCC BAA-672</strain>
    </source>
</reference>
<reference key="2">
    <citation type="journal article" date="2016" name="Proc. Natl. Acad. Sci. U.S.A.">
        <title>Assignment of function to a domain of unknown function: DUF1537 is a new kinase family in catabolic pathways for acid sugars.</title>
        <authorList>
            <person name="Zhang X."/>
            <person name="Carter M.S."/>
            <person name="Vetting M.W."/>
            <person name="San Francisco B."/>
            <person name="Zhao S."/>
            <person name="Al-Obaidi N.F."/>
            <person name="Solbiati J.O."/>
            <person name="Thiaville J.J."/>
            <person name="de Crecy-Lagard V."/>
            <person name="Jacobson M.P."/>
            <person name="Almo S.C."/>
            <person name="Gerlt J.A."/>
        </authorList>
    </citation>
    <scope>FUNCTION</scope>
    <scope>CATALYTIC ACTIVITY</scope>
    <scope>BIOPHYSICOCHEMICAL PROPERTIES</scope>
    <source>
        <strain>SCRI 1043 / ATCC BAA-672</strain>
    </source>
</reference>
<evidence type="ECO:0000250" key="1">
    <source>
        <dbReference type="UniProtKB" id="P31937"/>
    </source>
</evidence>
<evidence type="ECO:0000250" key="2">
    <source>
        <dbReference type="UniProtKB" id="Q9I5I6"/>
    </source>
</evidence>
<evidence type="ECO:0000269" key="3">
    <source>
    </source>
</evidence>
<evidence type="ECO:0000303" key="4">
    <source>
    </source>
</evidence>
<evidence type="ECO:0000305" key="5"/>
<evidence type="ECO:0000312" key="6">
    <source>
        <dbReference type="EMBL" id="CAG77224.1"/>
    </source>
</evidence>
<comment type="function">
    <text evidence="3">Catalyzes oxidation of L-threonate to 2-oxo-tetronate. Can use either NAD(+) or NADP(+) as cosubstrate, with a preference for NAD(+).</text>
</comment>
<comment type="catalytic activity">
    <reaction evidence="3">
        <text>L-threonate + NAD(+) = 2-dehydro-L-erythronate + NADH + H(+)</text>
        <dbReference type="Rhea" id="RHEA:52548"/>
        <dbReference type="ChEBI" id="CHEBI:15378"/>
        <dbReference type="ChEBI" id="CHEBI:57540"/>
        <dbReference type="ChEBI" id="CHEBI:57561"/>
        <dbReference type="ChEBI" id="CHEBI:57945"/>
        <dbReference type="ChEBI" id="CHEBI:136669"/>
        <dbReference type="EC" id="1.1.1.411"/>
    </reaction>
</comment>
<comment type="biophysicochemical properties">
    <kinetics>
        <KM evidence="3">0.13 mM for NAD(+)</KM>
        <KM evidence="3">0.97 mM for NADP(+)</KM>
        <text evidence="3">kcat is 54 sec(-1) with NAD(+) as cosubstrate. kcat is 4.7 sec(-1) with NADP(+) as cosubstrate.</text>
    </kinetics>
</comment>
<comment type="similarity">
    <text evidence="5">Belongs to the HIBADH-related family. L-threonate dehydrogenase subfamily.</text>
</comment>
<proteinExistence type="evidence at protein level"/>
<sequence length="304" mass="31629">MKKTSDYAVAVIGLGSMGFGAAASCINAGLTTYGVDINPQALEKLRQAGAAQADTRIDAFADKLDAVVLLVVNATQVNGILFGEPQVAAKLKPGTVVMVSSTISAQDAKNIEQRLAEHQLVMLDAPVSGGAAKAAAGDMTVMASGSDLAFEKLKPVLDAVAGKVYRIGEEIGLGATVKIIHQLLAGVHIAAGAEAMALAARADIPLDIMYDVVTNAAGNSWMFENRMRHVVDGDYTPKSAVDIFVKDLGLVTDTAKSLHFPLPLASTAFNMFTAASNAGFGKEDDSAVIKIFNGITLPEKKEAP</sequence>
<dbReference type="EC" id="1.1.1.411" evidence="3"/>
<dbReference type="EMBL" id="BX950851">
    <property type="protein sequence ID" value="CAG77224.1"/>
    <property type="molecule type" value="Genomic_DNA"/>
</dbReference>
<dbReference type="RefSeq" id="WP_011095791.1">
    <property type="nucleotide sequence ID" value="NC_004547.2"/>
</dbReference>
<dbReference type="SMR" id="Q6CZ26"/>
<dbReference type="STRING" id="218491.ECA4327"/>
<dbReference type="GeneID" id="57211020"/>
<dbReference type="KEGG" id="eca:ECA4327"/>
<dbReference type="PATRIC" id="fig|218491.5.peg.4406"/>
<dbReference type="eggNOG" id="COG2084">
    <property type="taxonomic scope" value="Bacteria"/>
</dbReference>
<dbReference type="HOGENOM" id="CLU_035117_1_2_6"/>
<dbReference type="OrthoDB" id="9786703at2"/>
<dbReference type="BRENDA" id="1.1.1.411">
    <property type="organism ID" value="9330"/>
</dbReference>
<dbReference type="Proteomes" id="UP000007966">
    <property type="component" value="Chromosome"/>
</dbReference>
<dbReference type="GO" id="GO:0051287">
    <property type="term" value="F:NAD binding"/>
    <property type="evidence" value="ECO:0007669"/>
    <property type="project" value="InterPro"/>
</dbReference>
<dbReference type="GO" id="GO:0050661">
    <property type="term" value="F:NADP binding"/>
    <property type="evidence" value="ECO:0007669"/>
    <property type="project" value="InterPro"/>
</dbReference>
<dbReference type="GO" id="GO:0016616">
    <property type="term" value="F:oxidoreductase activity, acting on the CH-OH group of donors, NAD or NADP as acceptor"/>
    <property type="evidence" value="ECO:0007669"/>
    <property type="project" value="InterPro"/>
</dbReference>
<dbReference type="GO" id="GO:0016054">
    <property type="term" value="P:organic acid catabolic process"/>
    <property type="evidence" value="ECO:0007669"/>
    <property type="project" value="UniProtKB-ARBA"/>
</dbReference>
<dbReference type="Gene3D" id="1.10.1040.10">
    <property type="entry name" value="N-(1-d-carboxylethyl)-l-norvaline Dehydrogenase, domain 2"/>
    <property type="match status" value="1"/>
</dbReference>
<dbReference type="Gene3D" id="3.40.50.720">
    <property type="entry name" value="NAD(P)-binding Rossmann-like Domain"/>
    <property type="match status" value="1"/>
</dbReference>
<dbReference type="InterPro" id="IPR002204">
    <property type="entry name" value="3-OH-isobutyrate_DH-rel_CS"/>
</dbReference>
<dbReference type="InterPro" id="IPR008927">
    <property type="entry name" value="6-PGluconate_DH-like_C_sf"/>
</dbReference>
<dbReference type="InterPro" id="IPR013328">
    <property type="entry name" value="6PGD_dom2"/>
</dbReference>
<dbReference type="InterPro" id="IPR006115">
    <property type="entry name" value="6PGDH_NADP-bd"/>
</dbReference>
<dbReference type="InterPro" id="IPR029154">
    <property type="entry name" value="HIBADH-like_NADP-bd"/>
</dbReference>
<dbReference type="InterPro" id="IPR015815">
    <property type="entry name" value="HIBADH-related"/>
</dbReference>
<dbReference type="InterPro" id="IPR050006">
    <property type="entry name" value="LtnD"/>
</dbReference>
<dbReference type="InterPro" id="IPR036291">
    <property type="entry name" value="NAD(P)-bd_dom_sf"/>
</dbReference>
<dbReference type="NCBIfam" id="NF043037">
    <property type="entry name" value="ThreonDh"/>
    <property type="match status" value="1"/>
</dbReference>
<dbReference type="PANTHER" id="PTHR43060">
    <property type="entry name" value="3-HYDROXYISOBUTYRATE DEHYDROGENASE-LIKE 1, MITOCHONDRIAL-RELATED"/>
    <property type="match status" value="1"/>
</dbReference>
<dbReference type="PANTHER" id="PTHR43060:SF17">
    <property type="entry name" value="L-THREONATE DEHYDROGENASE"/>
    <property type="match status" value="1"/>
</dbReference>
<dbReference type="Pfam" id="PF14833">
    <property type="entry name" value="NAD_binding_11"/>
    <property type="match status" value="1"/>
</dbReference>
<dbReference type="Pfam" id="PF03446">
    <property type="entry name" value="NAD_binding_2"/>
    <property type="match status" value="1"/>
</dbReference>
<dbReference type="PIRSF" id="PIRSF000103">
    <property type="entry name" value="HIBADH"/>
    <property type="match status" value="1"/>
</dbReference>
<dbReference type="SUPFAM" id="SSF48179">
    <property type="entry name" value="6-phosphogluconate dehydrogenase C-terminal domain-like"/>
    <property type="match status" value="1"/>
</dbReference>
<dbReference type="SUPFAM" id="SSF51735">
    <property type="entry name" value="NAD(P)-binding Rossmann-fold domains"/>
    <property type="match status" value="1"/>
</dbReference>
<dbReference type="PROSITE" id="PS00895">
    <property type="entry name" value="3_HYDROXYISOBUT_DH"/>
    <property type="match status" value="1"/>
</dbReference>
<accession>Q6CZ26</accession>
<feature type="chain" id="PRO_0000439749" description="L-threonate dehydrogenase">
    <location>
        <begin position="1"/>
        <end position="304"/>
    </location>
</feature>
<feature type="active site" evidence="2">
    <location>
        <position position="178"/>
    </location>
</feature>
<feature type="binding site" evidence="1">
    <location>
        <begin position="7"/>
        <end position="35"/>
    </location>
    <ligand>
        <name>NAD(+)</name>
        <dbReference type="ChEBI" id="CHEBI:57540"/>
    </ligand>
</feature>
<feature type="binding site" evidence="1">
    <location>
        <position position="102"/>
    </location>
    <ligand>
        <name>NAD(+)</name>
        <dbReference type="ChEBI" id="CHEBI:57540"/>
    </ligand>
</feature>
<feature type="binding site" evidence="1">
    <location>
        <position position="246"/>
    </location>
    <ligand>
        <name>NAD(+)</name>
        <dbReference type="ChEBI" id="CHEBI:57540"/>
    </ligand>
</feature>
<protein>
    <recommendedName>
        <fullName evidence="4">L-threonate dehydrogenase</fullName>
        <ecNumber evidence="3">1.1.1.411</ecNumber>
    </recommendedName>
</protein>
<gene>
    <name evidence="4" type="primary">ltnD</name>
    <name evidence="6" type="ordered locus">ECA4327</name>
</gene>
<organism>
    <name type="scientific">Pectobacterium atrosepticum (strain SCRI 1043 / ATCC BAA-672)</name>
    <name type="common">Erwinia carotovora subsp. atroseptica</name>
    <dbReference type="NCBI Taxonomy" id="218491"/>
    <lineage>
        <taxon>Bacteria</taxon>
        <taxon>Pseudomonadati</taxon>
        <taxon>Pseudomonadota</taxon>
        <taxon>Gammaproteobacteria</taxon>
        <taxon>Enterobacterales</taxon>
        <taxon>Pectobacteriaceae</taxon>
        <taxon>Pectobacterium</taxon>
    </lineage>
</organism>
<name>LTND_PECAS</name>